<comment type="function">
    <text evidence="2">Participates in at least several B-cell activation processes as well as of other cell types. It is a costimulator of DNA-synthesis. It induces the expression of class II MHC molecules on resting B-cells. It enhances both secretion and cell surface expression of IgE and IgG1. It also regulates the expression of the low affinity Fc receptor for IgE (CD23) on both lymphocytes and monocytes. Positively regulates IL31RA expression in macrophages. Stimulates autophagy in dendritic cells by interfering with mTORC1 signaling and through the induction of RUFY4.</text>
</comment>
<comment type="subcellular location">
    <subcellularLocation>
        <location>Secreted</location>
    </subcellularLocation>
</comment>
<comment type="similarity">
    <text evidence="4">Belongs to the IL-4/IL-13 family.</text>
</comment>
<name>IL4_BOVIN</name>
<reference key="1">
    <citation type="journal article" date="1992" name="Gene">
        <title>Cloning of a full-length cDNA encoding bovine interleukin 4 by the polymerase chain reaction.</title>
        <authorList>
            <person name="Heussler V.T."/>
            <person name="Eichhorn M."/>
            <person name="Dobbelaere D.A."/>
        </authorList>
    </citation>
    <scope>NUCLEOTIDE SEQUENCE [MRNA]</scope>
</reference>
<reference key="2">
    <citation type="journal article" date="1995" name="Mamm. Genome">
        <title>The bovine interleukin-4 gene: genomic organization, localization, and evolution.</title>
        <authorList>
            <person name="Buitkamp J."/>
            <person name="Schwaiger F.W."/>
            <person name="Solinas-Toldo S."/>
            <person name="Fries R."/>
            <person name="Epplen J.T."/>
        </authorList>
    </citation>
    <scope>NUCLEOTIDE SEQUENCE [GENOMIC DNA]</scope>
</reference>
<reference key="3">
    <citation type="submission" date="2007-11" db="EMBL/GenBank/DDBJ databases">
        <title>U.S. veterinary immune reagent network: expressed bovine gene sequences.</title>
        <authorList>
            <consortium name="U.S. Veterinary Immune Reagent Network"/>
            <person name="Hudgens T."/>
            <person name="Tompkins D."/>
            <person name="Baldwin C.L."/>
        </authorList>
    </citation>
    <scope>NUCLEOTIDE SEQUENCE [LARGE SCALE MRNA]</scope>
    <source>
        <strain>Belted Galloway</strain>
        <tissue>Peripheral blood</tissue>
    </source>
</reference>
<dbReference type="EMBL" id="M77120">
    <property type="protein sequence ID" value="AAA30587.1"/>
    <property type="molecule type" value="mRNA"/>
</dbReference>
<dbReference type="EMBL" id="U14160">
    <property type="protein sequence ID" value="AAA82730.1"/>
    <property type="molecule type" value="Genomic_DNA"/>
</dbReference>
<dbReference type="EMBL" id="U14131">
    <property type="protein sequence ID" value="AAA82730.1"/>
    <property type="status" value="JOINED"/>
    <property type="molecule type" value="Genomic_DNA"/>
</dbReference>
<dbReference type="EMBL" id="U14159">
    <property type="protein sequence ID" value="AAA82730.1"/>
    <property type="status" value="JOINED"/>
    <property type="molecule type" value="Genomic_DNA"/>
</dbReference>
<dbReference type="EMBL" id="EU276069">
    <property type="protein sequence ID" value="ABX72067.1"/>
    <property type="molecule type" value="mRNA"/>
</dbReference>
<dbReference type="PIR" id="JH0684">
    <property type="entry name" value="JH0684"/>
</dbReference>
<dbReference type="RefSeq" id="NP_776346.1">
    <property type="nucleotide sequence ID" value="NM_173921.2"/>
</dbReference>
<dbReference type="SMR" id="P30367"/>
<dbReference type="FunCoup" id="P30367">
    <property type="interactions" value="817"/>
</dbReference>
<dbReference type="STRING" id="9913.ENSBTAP00000021215"/>
<dbReference type="GlyCosmos" id="P30367">
    <property type="glycosylation" value="1 site, No reported glycans"/>
</dbReference>
<dbReference type="GlyGen" id="P30367">
    <property type="glycosylation" value="1 site"/>
</dbReference>
<dbReference type="PaxDb" id="9913-ENSBTAP00000021215"/>
<dbReference type="Ensembl" id="ENSBTAT00000021215.3">
    <property type="protein sequence ID" value="ENSBTAP00000021215.2"/>
    <property type="gene ID" value="ENSBTAG00000015957.3"/>
</dbReference>
<dbReference type="GeneID" id="280824"/>
<dbReference type="KEGG" id="bta:280824"/>
<dbReference type="CTD" id="3565"/>
<dbReference type="VEuPathDB" id="HostDB:ENSBTAG00000015957"/>
<dbReference type="VGNC" id="VGNC:30161">
    <property type="gene designation" value="IL4"/>
</dbReference>
<dbReference type="eggNOG" id="KOG3886">
    <property type="taxonomic scope" value="Eukaryota"/>
</dbReference>
<dbReference type="GeneTree" id="ENSGT00390000013108"/>
<dbReference type="HOGENOM" id="CLU_154691_0_0_1"/>
<dbReference type="InParanoid" id="P30367"/>
<dbReference type="OMA" id="GTPCTEM"/>
<dbReference type="OrthoDB" id="9528087at2759"/>
<dbReference type="TreeFam" id="TF336383"/>
<dbReference type="Reactome" id="R-BTA-6785807">
    <property type="pathway name" value="Interleukin-4 and Interleukin-13 signaling"/>
</dbReference>
<dbReference type="Proteomes" id="UP000009136">
    <property type="component" value="Chromosome 7"/>
</dbReference>
<dbReference type="Bgee" id="ENSBTAG00000015957">
    <property type="expression patterns" value="Expressed in mesenteric lymph node and 22 other cell types or tissues"/>
</dbReference>
<dbReference type="GO" id="GO:0005615">
    <property type="term" value="C:extracellular space"/>
    <property type="evidence" value="ECO:0000250"/>
    <property type="project" value="UniProtKB"/>
</dbReference>
<dbReference type="GO" id="GO:0005125">
    <property type="term" value="F:cytokine activity"/>
    <property type="evidence" value="ECO:0007669"/>
    <property type="project" value="UniProtKB-KW"/>
</dbReference>
<dbReference type="GO" id="GO:0008083">
    <property type="term" value="F:growth factor activity"/>
    <property type="evidence" value="ECO:0007669"/>
    <property type="project" value="UniProtKB-KW"/>
</dbReference>
<dbReference type="GO" id="GO:0005136">
    <property type="term" value="F:interleukin-4 receptor binding"/>
    <property type="evidence" value="ECO:0007669"/>
    <property type="project" value="InterPro"/>
</dbReference>
<dbReference type="GO" id="GO:0042113">
    <property type="term" value="P:B cell activation"/>
    <property type="evidence" value="ECO:0007669"/>
    <property type="project" value="UniProtKB-KW"/>
</dbReference>
<dbReference type="GO" id="GO:0007259">
    <property type="term" value="P:cell surface receptor signaling pathway via JAK-STAT"/>
    <property type="evidence" value="ECO:0007669"/>
    <property type="project" value="Ensembl"/>
</dbReference>
<dbReference type="GO" id="GO:0006955">
    <property type="term" value="P:immune response"/>
    <property type="evidence" value="ECO:0007669"/>
    <property type="project" value="InterPro"/>
</dbReference>
<dbReference type="GO" id="GO:0035771">
    <property type="term" value="P:interleukin-4-mediated signaling pathway"/>
    <property type="evidence" value="ECO:0000318"/>
    <property type="project" value="GO_Central"/>
</dbReference>
<dbReference type="GO" id="GO:0042116">
    <property type="term" value="P:macrophage activation"/>
    <property type="evidence" value="ECO:0007669"/>
    <property type="project" value="Ensembl"/>
</dbReference>
<dbReference type="GO" id="GO:0043011">
    <property type="term" value="P:myeloid dendritic cell differentiation"/>
    <property type="evidence" value="ECO:0007669"/>
    <property type="project" value="Ensembl"/>
</dbReference>
<dbReference type="GO" id="GO:0043066">
    <property type="term" value="P:negative regulation of apoptotic process"/>
    <property type="evidence" value="ECO:0000250"/>
    <property type="project" value="UniProtKB"/>
</dbReference>
<dbReference type="GO" id="GO:1903845">
    <property type="term" value="P:negative regulation of cellular response to transforming growth factor beta stimulus"/>
    <property type="evidence" value="ECO:0007669"/>
    <property type="project" value="Ensembl"/>
</dbReference>
<dbReference type="GO" id="GO:1903660">
    <property type="term" value="P:negative regulation of complement-dependent cytotoxicity"/>
    <property type="evidence" value="ECO:0007669"/>
    <property type="project" value="Ensembl"/>
</dbReference>
<dbReference type="GO" id="GO:2000352">
    <property type="term" value="P:negative regulation of endothelial cell apoptotic process"/>
    <property type="evidence" value="ECO:0007669"/>
    <property type="project" value="Ensembl"/>
</dbReference>
<dbReference type="GO" id="GO:0010633">
    <property type="term" value="P:negative regulation of epithelial cell migration"/>
    <property type="evidence" value="ECO:0007669"/>
    <property type="project" value="Ensembl"/>
</dbReference>
<dbReference type="GO" id="GO:0050728">
    <property type="term" value="P:negative regulation of inflammatory response"/>
    <property type="evidence" value="ECO:0000318"/>
    <property type="project" value="GO_Central"/>
</dbReference>
<dbReference type="GO" id="GO:0045671">
    <property type="term" value="P:negative regulation of osteoclast differentiation"/>
    <property type="evidence" value="ECO:0000250"/>
    <property type="project" value="UniProtKB"/>
</dbReference>
<dbReference type="GO" id="GO:0000122">
    <property type="term" value="P:negative regulation of transcription by RNA polymerase II"/>
    <property type="evidence" value="ECO:0007669"/>
    <property type="project" value="Ensembl"/>
</dbReference>
<dbReference type="GO" id="GO:0030890">
    <property type="term" value="P:positive regulation of B cell proliferation"/>
    <property type="evidence" value="ECO:0000250"/>
    <property type="project" value="UniProtKB"/>
</dbReference>
<dbReference type="GO" id="GO:0030335">
    <property type="term" value="P:positive regulation of cell migration"/>
    <property type="evidence" value="ECO:0007669"/>
    <property type="project" value="Ensembl"/>
</dbReference>
<dbReference type="GO" id="GO:0045893">
    <property type="term" value="P:positive regulation of DNA-templated transcription"/>
    <property type="evidence" value="ECO:0000318"/>
    <property type="project" value="GO_Central"/>
</dbReference>
<dbReference type="GO" id="GO:0032733">
    <property type="term" value="P:positive regulation of interleukin-10 production"/>
    <property type="evidence" value="ECO:0007669"/>
    <property type="project" value="Ensembl"/>
</dbReference>
<dbReference type="GO" id="GO:0032736">
    <property type="term" value="P:positive regulation of interleukin-13 production"/>
    <property type="evidence" value="ECO:0007669"/>
    <property type="project" value="Ensembl"/>
</dbReference>
<dbReference type="GO" id="GO:0048295">
    <property type="term" value="P:positive regulation of isotype switching to IgE isotypes"/>
    <property type="evidence" value="ECO:0000250"/>
    <property type="project" value="UniProtKB"/>
</dbReference>
<dbReference type="GO" id="GO:0048304">
    <property type="term" value="P:positive regulation of isotype switching to IgG isotypes"/>
    <property type="evidence" value="ECO:0000250"/>
    <property type="project" value="UniProtKB"/>
</dbReference>
<dbReference type="GO" id="GO:0016239">
    <property type="term" value="P:positive regulation of macroautophagy"/>
    <property type="evidence" value="ECO:0000250"/>
    <property type="project" value="UniProtKB"/>
</dbReference>
<dbReference type="GO" id="GO:0045348">
    <property type="term" value="P:positive regulation of MHC class II biosynthetic process"/>
    <property type="evidence" value="ECO:0000250"/>
    <property type="project" value="UniProtKB"/>
</dbReference>
<dbReference type="GO" id="GO:0045582">
    <property type="term" value="P:positive regulation of T cell differentiation"/>
    <property type="evidence" value="ECO:0007669"/>
    <property type="project" value="Ensembl"/>
</dbReference>
<dbReference type="GO" id="GO:0042102">
    <property type="term" value="P:positive regulation of T cell proliferation"/>
    <property type="evidence" value="ECO:0000250"/>
    <property type="project" value="UniProtKB"/>
</dbReference>
<dbReference type="GO" id="GO:2000553">
    <property type="term" value="P:positive regulation of T-helper 2 cell cytokine production"/>
    <property type="evidence" value="ECO:0007669"/>
    <property type="project" value="Ensembl"/>
</dbReference>
<dbReference type="GO" id="GO:0045944">
    <property type="term" value="P:positive regulation of transcription by RNA polymerase II"/>
    <property type="evidence" value="ECO:0000250"/>
    <property type="project" value="UniProtKB"/>
</dbReference>
<dbReference type="GO" id="GO:0050776">
    <property type="term" value="P:regulation of immune response"/>
    <property type="evidence" value="ECO:0000250"/>
    <property type="project" value="UniProtKB"/>
</dbReference>
<dbReference type="GO" id="GO:0042110">
    <property type="term" value="P:T cell activation"/>
    <property type="evidence" value="ECO:0007669"/>
    <property type="project" value="Ensembl"/>
</dbReference>
<dbReference type="FunFam" id="1.20.1250.10:FF:000014">
    <property type="entry name" value="Interleukin-4"/>
    <property type="match status" value="1"/>
</dbReference>
<dbReference type="Gene3D" id="1.20.1250.10">
    <property type="match status" value="1"/>
</dbReference>
<dbReference type="InterPro" id="IPR009079">
    <property type="entry name" value="4_helix_cytokine-like_core"/>
</dbReference>
<dbReference type="InterPro" id="IPR002354">
    <property type="entry name" value="IL-4"/>
</dbReference>
<dbReference type="InterPro" id="IPR001325">
    <property type="entry name" value="IL-4/IL-13"/>
</dbReference>
<dbReference type="InterPro" id="IPR018096">
    <property type="entry name" value="IL-4/IL-13_CS"/>
</dbReference>
<dbReference type="PANTHER" id="PTHR47401">
    <property type="entry name" value="INTERLEUKIN-4"/>
    <property type="match status" value="1"/>
</dbReference>
<dbReference type="PANTHER" id="PTHR47401:SF1">
    <property type="entry name" value="INTERLEUKIN-4"/>
    <property type="match status" value="1"/>
</dbReference>
<dbReference type="Pfam" id="PF00727">
    <property type="entry name" value="IL4"/>
    <property type="match status" value="1"/>
</dbReference>
<dbReference type="PIRSF" id="PIRSF001941">
    <property type="entry name" value="Interleukin_4"/>
    <property type="match status" value="1"/>
</dbReference>
<dbReference type="PRINTS" id="PR00431">
    <property type="entry name" value="INTERLEUKIN4"/>
</dbReference>
<dbReference type="SMART" id="SM00190">
    <property type="entry name" value="IL4_13"/>
    <property type="match status" value="1"/>
</dbReference>
<dbReference type="SUPFAM" id="SSF47266">
    <property type="entry name" value="4-helical cytokines"/>
    <property type="match status" value="1"/>
</dbReference>
<dbReference type="PROSITE" id="PS00838">
    <property type="entry name" value="INTERLEUKIN_4_13"/>
    <property type="match status" value="1"/>
</dbReference>
<protein>
    <recommendedName>
        <fullName>Interleukin-4</fullName>
        <shortName>IL-4</shortName>
    </recommendedName>
    <alternativeName>
        <fullName>B-cell stimulatory factor 1</fullName>
        <shortName>BSF-1</shortName>
    </alternativeName>
    <alternativeName>
        <fullName>Lymphocyte stimulatory factor 1</fullName>
    </alternativeName>
</protein>
<feature type="signal peptide" evidence="1">
    <location>
        <begin position="1"/>
        <end position="24"/>
    </location>
</feature>
<feature type="chain" id="PRO_0000015524" description="Interleukin-4">
    <location>
        <begin position="25"/>
        <end position="135"/>
    </location>
</feature>
<feature type="glycosylation site" description="N-linked (GlcNAc...) asparagine" evidence="3">
    <location>
        <position position="62"/>
    </location>
</feature>
<feature type="disulfide bond" evidence="1">
    <location>
        <begin position="27"/>
        <end position="135"/>
    </location>
</feature>
<feature type="disulfide bond" evidence="1">
    <location>
        <begin position="48"/>
        <end position="85"/>
    </location>
</feature>
<feature type="disulfide bond" evidence="1">
    <location>
        <begin position="70"/>
        <end position="105"/>
    </location>
</feature>
<feature type="sequence conflict" description="In Ref. 1; AAA30587." evidence="4" ref="1">
    <original>S</original>
    <variation>Y</variation>
    <location>
        <position position="5"/>
    </location>
</feature>
<organism>
    <name type="scientific">Bos taurus</name>
    <name type="common">Bovine</name>
    <dbReference type="NCBI Taxonomy" id="9913"/>
    <lineage>
        <taxon>Eukaryota</taxon>
        <taxon>Metazoa</taxon>
        <taxon>Chordata</taxon>
        <taxon>Craniata</taxon>
        <taxon>Vertebrata</taxon>
        <taxon>Euteleostomi</taxon>
        <taxon>Mammalia</taxon>
        <taxon>Eutheria</taxon>
        <taxon>Laurasiatheria</taxon>
        <taxon>Artiodactyla</taxon>
        <taxon>Ruminantia</taxon>
        <taxon>Pecora</taxon>
        <taxon>Bovidae</taxon>
        <taxon>Bovinae</taxon>
        <taxon>Bos</taxon>
    </lineage>
</organism>
<sequence length="135" mass="15119">MGLTSQLIPVLVCLLVCTSHFVHGHKCDITLAEIIKTLNILTTRKNSCMELPVADVFAAPKNTTEKETFCRVGIELRRIYRSHTCLNKFLGGLDRNLNSLASKTCSVNEAKTSTSTLKDLLERLKTIMKEKYSKC</sequence>
<gene>
    <name type="primary">IL4</name>
</gene>
<keyword id="KW-0075">B-cell activation</keyword>
<keyword id="KW-0202">Cytokine</keyword>
<keyword id="KW-1015">Disulfide bond</keyword>
<keyword id="KW-0325">Glycoprotein</keyword>
<keyword id="KW-0339">Growth factor</keyword>
<keyword id="KW-1185">Reference proteome</keyword>
<keyword id="KW-0964">Secreted</keyword>
<keyword id="KW-0732">Signal</keyword>
<evidence type="ECO:0000250" key="1"/>
<evidence type="ECO:0000250" key="2">
    <source>
        <dbReference type="UniProtKB" id="P07750"/>
    </source>
</evidence>
<evidence type="ECO:0000255" key="3"/>
<evidence type="ECO:0000305" key="4"/>
<proteinExistence type="evidence at transcript level"/>
<accession>P30367</accession>
<accession>A9QWQ7</accession>